<sequence length="458" mass="51936">MAECRPWLVLWVGCCGCLCLALGELLNDGLLAVGMGTGDAARQEEAALPLGDTVSEHMLRLYDKYRSGGGRAKESLRYRQALPDGNTVRSFRAMNGDEHKKCHYMFNLTSLTSSENILSATLHYYLGDLLNSSHRCPHSLFCTQHGHAKPEFTLYLTLWSFNALQNPTHVISNFLINVSASQRDHPLWQWKDITQAVRKAKEYGEAVLGFNLTIEYPNHRSIDILGLKPYILVYANDSAISEPDSVVSSLHGPHTPLALKPNRKTEKAEQRKKRSTEILLPLQNNELPGAEYQYSVDEEGWEERKPYKNLQGRQNEKDKNKKKLRKGSRQKSQTLQFDEQTLKKARRKQWNEPRNCARRYLKVDFADIGWSEWIISPKSFDAYYCSGACQFPMPKSLKPSNHATIQSIVRAVGVVPGIPEPCCVPEKMSSLSILFLDENKNVVLKVYPNMTVESCACR</sequence>
<gene>
    <name type="primary">bmp3</name>
</gene>
<protein>
    <recommendedName>
        <fullName>Bone morphogenetic protein 3</fullName>
        <shortName>BMP-3</shortName>
        <shortName>xBMP-3</shortName>
    </recommendedName>
</protein>
<feature type="signal peptide" evidence="2">
    <location>
        <begin position="1"/>
        <end position="23"/>
    </location>
</feature>
<feature type="propeptide" id="PRO_0000033842" evidence="2">
    <location>
        <begin position="24"/>
        <end position="348"/>
    </location>
</feature>
<feature type="chain" id="PRO_0000033843" description="Bone morphogenetic protein 3">
    <location>
        <begin position="349"/>
        <end position="458"/>
    </location>
</feature>
<feature type="region of interest" description="Disordered" evidence="3">
    <location>
        <begin position="244"/>
        <end position="275"/>
    </location>
</feature>
<feature type="region of interest" description="Disordered" evidence="3">
    <location>
        <begin position="303"/>
        <end position="335"/>
    </location>
</feature>
<feature type="compositionally biased region" description="Basic residues" evidence="3">
    <location>
        <begin position="320"/>
        <end position="329"/>
    </location>
</feature>
<feature type="glycosylation site" description="N-linked (GlcNAc...) asparagine" evidence="2">
    <location>
        <position position="107"/>
    </location>
</feature>
<feature type="glycosylation site" description="N-linked (GlcNAc...) asparagine" evidence="2">
    <location>
        <position position="449"/>
    </location>
</feature>
<feature type="disulfide bond" evidence="1">
    <location>
        <begin position="356"/>
        <end position="423"/>
    </location>
</feature>
<feature type="disulfide bond" evidence="1">
    <location>
        <begin position="385"/>
        <end position="455"/>
    </location>
</feature>
<feature type="disulfide bond" evidence="1">
    <location>
        <begin position="389"/>
        <end position="457"/>
    </location>
</feature>
<feature type="disulfide bond" description="Interchain" evidence="1">
    <location>
        <position position="422"/>
    </location>
</feature>
<name>BMP3_XENLA</name>
<evidence type="ECO:0000250" key="1"/>
<evidence type="ECO:0000255" key="2"/>
<evidence type="ECO:0000256" key="3">
    <source>
        <dbReference type="SAM" id="MobiDB-lite"/>
    </source>
</evidence>
<evidence type="ECO:0000269" key="4">
    <source>
    </source>
</evidence>
<evidence type="ECO:0000305" key="5"/>
<dbReference type="EMBL" id="AB059563">
    <property type="protein sequence ID" value="BAC77407.1"/>
    <property type="molecule type" value="mRNA"/>
</dbReference>
<dbReference type="RefSeq" id="NP_001084184.1">
    <property type="nucleotide sequence ID" value="NM_001090715.1"/>
</dbReference>
<dbReference type="GlyCosmos" id="Q7T2X7">
    <property type="glycosylation" value="2 sites, No reported glycans"/>
</dbReference>
<dbReference type="GeneID" id="399354"/>
<dbReference type="KEGG" id="xla:399354"/>
<dbReference type="AGR" id="Xenbase:XB-GENE-864983"/>
<dbReference type="CTD" id="399354"/>
<dbReference type="Xenbase" id="XB-GENE-864983">
    <property type="gene designation" value="bmp3.L"/>
</dbReference>
<dbReference type="OrthoDB" id="5987191at2759"/>
<dbReference type="Proteomes" id="UP000186698">
    <property type="component" value="Chromosome 1L"/>
</dbReference>
<dbReference type="Bgee" id="399354">
    <property type="expression patterns" value="Expressed in heart and 13 other cell types or tissues"/>
</dbReference>
<dbReference type="GO" id="GO:0005615">
    <property type="term" value="C:extracellular space"/>
    <property type="evidence" value="ECO:0000318"/>
    <property type="project" value="GO_Central"/>
</dbReference>
<dbReference type="GO" id="GO:0005125">
    <property type="term" value="F:cytokine activity"/>
    <property type="evidence" value="ECO:0000318"/>
    <property type="project" value="GO_Central"/>
</dbReference>
<dbReference type="GO" id="GO:0008083">
    <property type="term" value="F:growth factor activity"/>
    <property type="evidence" value="ECO:0007669"/>
    <property type="project" value="UniProtKB-KW"/>
</dbReference>
<dbReference type="GO" id="GO:0016015">
    <property type="term" value="F:morphogen activity"/>
    <property type="evidence" value="ECO:0007669"/>
    <property type="project" value="UniProtKB-KW"/>
</dbReference>
<dbReference type="GO" id="GO:0009653">
    <property type="term" value="P:anatomical structure morphogenesis"/>
    <property type="evidence" value="ECO:0007669"/>
    <property type="project" value="UniProtKB-KW"/>
</dbReference>
<dbReference type="GO" id="GO:0001649">
    <property type="term" value="P:osteoblast differentiation"/>
    <property type="evidence" value="ECO:0007669"/>
    <property type="project" value="InterPro"/>
</dbReference>
<dbReference type="CDD" id="cd19393">
    <property type="entry name" value="TGF_beta_BMP3"/>
    <property type="match status" value="1"/>
</dbReference>
<dbReference type="FunFam" id="2.10.90.10:FF:000008">
    <property type="entry name" value="Bone morphogenetic protein 3"/>
    <property type="match status" value="1"/>
</dbReference>
<dbReference type="Gene3D" id="2.60.120.970">
    <property type="match status" value="1"/>
</dbReference>
<dbReference type="Gene3D" id="2.10.90.10">
    <property type="entry name" value="Cystine-knot cytokines"/>
    <property type="match status" value="1"/>
</dbReference>
<dbReference type="InterPro" id="IPR017197">
    <property type="entry name" value="BMP3/BMP3B"/>
</dbReference>
<dbReference type="InterPro" id="IPR029034">
    <property type="entry name" value="Cystine-knot_cytokine"/>
</dbReference>
<dbReference type="InterPro" id="IPR001839">
    <property type="entry name" value="TGF-b_C"/>
</dbReference>
<dbReference type="InterPro" id="IPR001111">
    <property type="entry name" value="TGF-b_propeptide"/>
</dbReference>
<dbReference type="InterPro" id="IPR015615">
    <property type="entry name" value="TGF-beta-rel"/>
</dbReference>
<dbReference type="InterPro" id="IPR017948">
    <property type="entry name" value="TGFb_CS"/>
</dbReference>
<dbReference type="PANTHER" id="PTHR11848:SF144">
    <property type="entry name" value="BONE MORPHOGENETIC PROTEIN 3"/>
    <property type="match status" value="1"/>
</dbReference>
<dbReference type="PANTHER" id="PTHR11848">
    <property type="entry name" value="TGF-BETA FAMILY"/>
    <property type="match status" value="1"/>
</dbReference>
<dbReference type="Pfam" id="PF00019">
    <property type="entry name" value="TGF_beta"/>
    <property type="match status" value="1"/>
</dbReference>
<dbReference type="Pfam" id="PF00688">
    <property type="entry name" value="TGFb_propeptide"/>
    <property type="match status" value="1"/>
</dbReference>
<dbReference type="PIRSF" id="PIRSF037403">
    <property type="entry name" value="BMP3/GDF10"/>
    <property type="match status" value="1"/>
</dbReference>
<dbReference type="SMART" id="SM00204">
    <property type="entry name" value="TGFB"/>
    <property type="match status" value="1"/>
</dbReference>
<dbReference type="SUPFAM" id="SSF57501">
    <property type="entry name" value="Cystine-knot cytokines"/>
    <property type="match status" value="1"/>
</dbReference>
<dbReference type="PROSITE" id="PS00250">
    <property type="entry name" value="TGF_BETA_1"/>
    <property type="match status" value="1"/>
</dbReference>
<dbReference type="PROSITE" id="PS51362">
    <property type="entry name" value="TGF_BETA_2"/>
    <property type="match status" value="1"/>
</dbReference>
<comment type="function">
    <text evidence="4">Dorsalizing factor. Antagonizes mesoderm formation by ventralizing BMPs.</text>
</comment>
<comment type="subunit">
    <text>Homodimer. Can form heterodimers with ADMP, BMP-2-I and/or BMP-2-II, and DERRIERE.</text>
</comment>
<comment type="subcellular location">
    <subcellularLocation>
        <location evidence="4">Secreted</location>
    </subcellularLocation>
</comment>
<comment type="developmental stage">
    <text evidence="4">Tends to mark the dorsal ectodermal and mesodermal cells. Initially expressed in the embryonic ectoderm and throughout the marginal zone from the late blastula to gastrula stages. Expression is restricted to the chordal and prechordal mesoderm by the neurula stages, and to certain cells of the cephalic neural crest at the tailbud stage.</text>
</comment>
<comment type="similarity">
    <text evidence="5">Belongs to the TGF-beta family.</text>
</comment>
<reference key="1">
    <citation type="journal article" date="2003" name="Dev. Biol.">
        <title>Coordination of BMP-3b and cerberus is required for head formation of Xenopus embryos.</title>
        <authorList>
            <person name="Hino J."/>
            <person name="Nishimatsu S."/>
            <person name="Nagai T."/>
            <person name="Matsuo H."/>
            <person name="Kangawa K."/>
            <person name="Nohno T."/>
        </authorList>
    </citation>
    <scope>NUCLEOTIDE SEQUENCE [MRNA]</scope>
    <scope>FUNCTION</scope>
    <scope>INTERACTION WITH BMP-2; ADMP AND DERRIERE</scope>
    <scope>SUBCELLULAR LOCATION</scope>
    <scope>DEVELOPMENTAL STAGE</scope>
</reference>
<keyword id="KW-0165">Cleavage on pair of basic residues</keyword>
<keyword id="KW-0202">Cytokine</keyword>
<keyword id="KW-0217">Developmental protein</keyword>
<keyword id="KW-0221">Differentiation</keyword>
<keyword id="KW-1015">Disulfide bond</keyword>
<keyword id="KW-0325">Glycoprotein</keyword>
<keyword id="KW-0339">Growth factor</keyword>
<keyword id="KW-0504">Morphogen</keyword>
<keyword id="KW-1185">Reference proteome</keyword>
<keyword id="KW-0964">Secreted</keyword>
<keyword id="KW-0732">Signal</keyword>
<organism>
    <name type="scientific">Xenopus laevis</name>
    <name type="common">African clawed frog</name>
    <dbReference type="NCBI Taxonomy" id="8355"/>
    <lineage>
        <taxon>Eukaryota</taxon>
        <taxon>Metazoa</taxon>
        <taxon>Chordata</taxon>
        <taxon>Craniata</taxon>
        <taxon>Vertebrata</taxon>
        <taxon>Euteleostomi</taxon>
        <taxon>Amphibia</taxon>
        <taxon>Batrachia</taxon>
        <taxon>Anura</taxon>
        <taxon>Pipoidea</taxon>
        <taxon>Pipidae</taxon>
        <taxon>Xenopodinae</taxon>
        <taxon>Xenopus</taxon>
        <taxon>Xenopus</taxon>
    </lineage>
</organism>
<accession>Q7T2X7</accession>
<proteinExistence type="evidence at protein level"/>